<gene>
    <name type="primary">ND2</name>
</gene>
<protein>
    <recommendedName>
        <fullName>NADH-ubiquinone oxidoreductase chain 2</fullName>
        <ecNumber>7.1.1.2</ecNumber>
    </recommendedName>
    <alternativeName>
        <fullName>NADH dehydrogenase subunit 2</fullName>
    </alternativeName>
</protein>
<sequence>MVVCGETMKLVSLGVMLIGTILSVSSEELVGVWLGLELNLYGFLVIMNPDGHYSPEPCVKYFVVQSTGSILMLVGFVSLMEQHVVSGLVMSTAXTVLKSGVFPLHSWVPSVIKNSSWLASGLMLTWQKVAPLVFLSMILPSKSLWVVIVSMAGIGAVGGLNQNSVRVMSAYSSFVHTSWMLLGLTWSSVVFVGYFAVYSLSVGLFFYGCSLMNKMSMGSQLSSAASGMGLLMLMGMPPFLGFLAKVLVFLMSGSPVIVACIMGSVISLKFYIDFFYSMVMKSLVDKNKVEVKAIWSLVICMNIMGGALILVSFI</sequence>
<reference key="1">
    <citation type="journal article" date="2004" name="Mol. Biol. Evol.">
        <title>Complete sequences of the highly rearranged molluscan mitochondrial genomes of the scaphopod Graptacme eborea and the bivalve Mytilus edulis.</title>
        <authorList>
            <person name="Boore J.L."/>
            <person name="Medina M."/>
            <person name="Rosenberg L.A."/>
        </authorList>
    </citation>
    <scope>NUCLEOTIDE SEQUENCE [GENOMIC DNA]</scope>
    <scope>SEQUENCE REVISION TO 228</scope>
</reference>
<reference key="2">
    <citation type="journal article" date="1992" name="Genetics">
        <title>A novel mitochondrial genome organization for the blue mussel, Mytilus edulis.</title>
        <authorList>
            <person name="Hoffmann R.J."/>
            <person name="Boore J.L."/>
            <person name="Brown W.M."/>
        </authorList>
    </citation>
    <scope>NUCLEOTIDE SEQUENCE [GENOMIC DNA] OF 1-128 AND 226-314</scope>
</reference>
<keyword id="KW-0249">Electron transport</keyword>
<keyword id="KW-0472">Membrane</keyword>
<keyword id="KW-0496">Mitochondrion</keyword>
<keyword id="KW-0999">Mitochondrion inner membrane</keyword>
<keyword id="KW-0520">NAD</keyword>
<keyword id="KW-0679">Respiratory chain</keyword>
<keyword id="KW-1278">Translocase</keyword>
<keyword id="KW-0812">Transmembrane</keyword>
<keyword id="KW-1133">Transmembrane helix</keyword>
<keyword id="KW-0813">Transport</keyword>
<keyword id="KW-0830">Ubiquinone</keyword>
<name>NU2M_MYTED</name>
<dbReference type="EC" id="7.1.1.2"/>
<dbReference type="EMBL" id="AY484747">
    <property type="protein sequence ID" value="AAT98408.1"/>
    <property type="molecule type" value="Genomic_DNA"/>
</dbReference>
<dbReference type="PIR" id="S28754">
    <property type="entry name" value="S28754"/>
</dbReference>
<dbReference type="RefSeq" id="YP_073341.1">
    <property type="nucleotide sequence ID" value="NC_006161.1"/>
</dbReference>
<dbReference type="GO" id="GO:0005743">
    <property type="term" value="C:mitochondrial inner membrane"/>
    <property type="evidence" value="ECO:0007669"/>
    <property type="project" value="UniProtKB-SubCell"/>
</dbReference>
<dbReference type="GO" id="GO:0008137">
    <property type="term" value="F:NADH dehydrogenase (ubiquinone) activity"/>
    <property type="evidence" value="ECO:0007669"/>
    <property type="project" value="UniProtKB-EC"/>
</dbReference>
<dbReference type="GO" id="GO:0006120">
    <property type="term" value="P:mitochondrial electron transport, NADH to ubiquinone"/>
    <property type="evidence" value="ECO:0007669"/>
    <property type="project" value="TreeGrafter"/>
</dbReference>
<dbReference type="InterPro" id="IPR050175">
    <property type="entry name" value="Complex_I_Subunit_2"/>
</dbReference>
<dbReference type="InterPro" id="IPR001750">
    <property type="entry name" value="ND/Mrp_TM"/>
</dbReference>
<dbReference type="PANTHER" id="PTHR46552">
    <property type="entry name" value="NADH-UBIQUINONE OXIDOREDUCTASE CHAIN 2"/>
    <property type="match status" value="1"/>
</dbReference>
<dbReference type="PANTHER" id="PTHR46552:SF1">
    <property type="entry name" value="NADH-UBIQUINONE OXIDOREDUCTASE CHAIN 2"/>
    <property type="match status" value="1"/>
</dbReference>
<dbReference type="Pfam" id="PF00361">
    <property type="entry name" value="Proton_antipo_M"/>
    <property type="match status" value="1"/>
</dbReference>
<organism>
    <name type="scientific">Mytilus edulis</name>
    <name type="common">Blue mussel</name>
    <dbReference type="NCBI Taxonomy" id="6550"/>
    <lineage>
        <taxon>Eukaryota</taxon>
        <taxon>Metazoa</taxon>
        <taxon>Spiralia</taxon>
        <taxon>Lophotrochozoa</taxon>
        <taxon>Mollusca</taxon>
        <taxon>Bivalvia</taxon>
        <taxon>Autobranchia</taxon>
        <taxon>Pteriomorphia</taxon>
        <taxon>Mytilida</taxon>
        <taxon>Mytiloidea</taxon>
        <taxon>Mytilidae</taxon>
        <taxon>Mytilinae</taxon>
        <taxon>Mytilus</taxon>
    </lineage>
</organism>
<proteinExistence type="inferred from homology"/>
<geneLocation type="mitochondrion"/>
<evidence type="ECO:0000250" key="1"/>
<evidence type="ECO:0000255" key="2"/>
<evidence type="ECO:0000305" key="3"/>
<accession>Q00229</accession>
<accession>Q68SR3</accession>
<feature type="chain" id="PRO_0000117609" description="NADH-ubiquinone oxidoreductase chain 2">
    <location>
        <begin position="1"/>
        <end position="314"/>
    </location>
</feature>
<feature type="transmembrane region" description="Helical" evidence="2">
    <location>
        <begin position="13"/>
        <end position="35"/>
    </location>
</feature>
<feature type="transmembrane region" description="Helical" evidence="2">
    <location>
        <begin position="61"/>
        <end position="80"/>
    </location>
</feature>
<feature type="transmembrane region" description="Helical" evidence="2">
    <location>
        <begin position="85"/>
        <end position="107"/>
    </location>
</feature>
<feature type="transmembrane region" description="Helical" evidence="2">
    <location>
        <begin position="117"/>
        <end position="139"/>
    </location>
</feature>
<feature type="transmembrane region" description="Helical" evidence="2">
    <location>
        <begin position="144"/>
        <end position="166"/>
    </location>
</feature>
<feature type="transmembrane region" description="Helical" evidence="2">
    <location>
        <begin position="189"/>
        <end position="209"/>
    </location>
</feature>
<feature type="transmembrane region" description="Helical" evidence="2">
    <location>
        <begin position="224"/>
        <end position="244"/>
    </location>
</feature>
<feature type="transmembrane region" description="Helical" evidence="2">
    <location>
        <begin position="246"/>
        <end position="266"/>
    </location>
</feature>
<feature type="transmembrane region" description="Helical" evidence="2">
    <location>
        <begin position="294"/>
        <end position="314"/>
    </location>
</feature>
<comment type="function">
    <text evidence="1">Core subunit of the mitochondrial membrane respiratory chain NADH dehydrogenase (Complex I) that is believed to belong to the minimal assembly required for catalysis. Complex I functions in the transfer of electrons from NADH to the respiratory chain. The immediate electron acceptor for the enzyme is believed to be ubiquinone (By similarity).</text>
</comment>
<comment type="catalytic activity">
    <reaction>
        <text>a ubiquinone + NADH + 5 H(+)(in) = a ubiquinol + NAD(+) + 4 H(+)(out)</text>
        <dbReference type="Rhea" id="RHEA:29091"/>
        <dbReference type="Rhea" id="RHEA-COMP:9565"/>
        <dbReference type="Rhea" id="RHEA-COMP:9566"/>
        <dbReference type="ChEBI" id="CHEBI:15378"/>
        <dbReference type="ChEBI" id="CHEBI:16389"/>
        <dbReference type="ChEBI" id="CHEBI:17976"/>
        <dbReference type="ChEBI" id="CHEBI:57540"/>
        <dbReference type="ChEBI" id="CHEBI:57945"/>
        <dbReference type="EC" id="7.1.1.2"/>
    </reaction>
</comment>
<comment type="subcellular location">
    <subcellularLocation>
        <location>Mitochondrion inner membrane</location>
        <topology>Multi-pass membrane protein</topology>
    </subcellularLocation>
</comment>
<comment type="similarity">
    <text evidence="3">Belongs to the complex I subunit 2 family.</text>
</comment>